<sequence>MTAFYKLCGMSMLSLVLADCTFLSANKPYDRDHDGELIVHMKDVNTHKEVGTITISPYIHDGNQEGMLITPHLYNLPANTTHGMHIHINPSCEDNGIAAGGHWDPDNTQKHLGPYNDNGHKGDLPVLVVNADGTATEPVVAPKLNSLEELAGHSLMLHAGGDNYSDKPQPLGGGGARMWCGVIAD</sequence>
<dbReference type="EC" id="1.15.1.1"/>
<dbReference type="EMBL" id="U35670">
    <property type="protein sequence ID" value="AAA99764.1"/>
    <property type="molecule type" value="Genomic_DNA"/>
</dbReference>
<dbReference type="EMBL" id="AM233362">
    <property type="protein sequence ID" value="CAJ78820.1"/>
    <property type="molecule type" value="Genomic_DNA"/>
</dbReference>
<dbReference type="RefSeq" id="WP_003014586.1">
    <property type="nucleotide sequence ID" value="NZ_CP009694.1"/>
</dbReference>
<dbReference type="SMR" id="Q59448"/>
<dbReference type="KEGG" id="ftl:FTL_0380"/>
<dbReference type="Proteomes" id="UP000001944">
    <property type="component" value="Chromosome"/>
</dbReference>
<dbReference type="GO" id="GO:0042597">
    <property type="term" value="C:periplasmic space"/>
    <property type="evidence" value="ECO:0007669"/>
    <property type="project" value="UniProtKB-SubCell"/>
</dbReference>
<dbReference type="GO" id="GO:0005507">
    <property type="term" value="F:copper ion binding"/>
    <property type="evidence" value="ECO:0007669"/>
    <property type="project" value="InterPro"/>
</dbReference>
<dbReference type="GO" id="GO:0004784">
    <property type="term" value="F:superoxide dismutase activity"/>
    <property type="evidence" value="ECO:0007669"/>
    <property type="project" value="UniProtKB-EC"/>
</dbReference>
<dbReference type="CDD" id="cd00305">
    <property type="entry name" value="Cu-Zn_Superoxide_Dismutase"/>
    <property type="match status" value="1"/>
</dbReference>
<dbReference type="Gene3D" id="2.60.40.200">
    <property type="entry name" value="Superoxide dismutase, copper/zinc binding domain"/>
    <property type="match status" value="1"/>
</dbReference>
<dbReference type="InterPro" id="IPR036423">
    <property type="entry name" value="SOD-like_Cu/Zn_dom_sf"/>
</dbReference>
<dbReference type="InterPro" id="IPR024134">
    <property type="entry name" value="SOD_Cu/Zn_/chaperone"/>
</dbReference>
<dbReference type="InterPro" id="IPR018152">
    <property type="entry name" value="SOD_Cu/Zn_BS"/>
</dbReference>
<dbReference type="InterPro" id="IPR001424">
    <property type="entry name" value="SOD_Cu_Zn_dom"/>
</dbReference>
<dbReference type="PANTHER" id="PTHR10003">
    <property type="entry name" value="SUPEROXIDE DISMUTASE CU-ZN -RELATED"/>
    <property type="match status" value="1"/>
</dbReference>
<dbReference type="Pfam" id="PF00080">
    <property type="entry name" value="Sod_Cu"/>
    <property type="match status" value="1"/>
</dbReference>
<dbReference type="SUPFAM" id="SSF49329">
    <property type="entry name" value="Cu,Zn superoxide dismutase-like"/>
    <property type="match status" value="1"/>
</dbReference>
<dbReference type="PROSITE" id="PS00087">
    <property type="entry name" value="SOD_CU_ZN_1"/>
    <property type="match status" value="1"/>
</dbReference>
<dbReference type="PROSITE" id="PS00332">
    <property type="entry name" value="SOD_CU_ZN_2"/>
    <property type="match status" value="1"/>
</dbReference>
<accession>Q59448</accession>
<accession>Q2A546</accession>
<keyword id="KW-0049">Antioxidant</keyword>
<keyword id="KW-0186">Copper</keyword>
<keyword id="KW-1015">Disulfide bond</keyword>
<keyword id="KW-0479">Metal-binding</keyword>
<keyword id="KW-0560">Oxidoreductase</keyword>
<keyword id="KW-0574">Periplasm</keyword>
<keyword id="KW-1185">Reference proteome</keyword>
<keyword id="KW-0732">Signal</keyword>
<keyword id="KW-0862">Zinc</keyword>
<reference key="1">
    <citation type="submission" date="1995-09" db="EMBL/GenBank/DDBJ databases">
        <authorList>
            <person name="Clairoux N."/>
            <person name="Nano F.E."/>
            <person name="Boissinot M."/>
        </authorList>
    </citation>
    <scope>NUCLEOTIDE SEQUENCE [GENOMIC DNA]</scope>
</reference>
<reference key="2">
    <citation type="submission" date="2006-03" db="EMBL/GenBank/DDBJ databases">
        <title>Complete genome sequence of Francisella tularensis LVS (Live Vaccine Strain).</title>
        <authorList>
            <person name="Chain P."/>
            <person name="Larimer F."/>
            <person name="Land M."/>
            <person name="Stilwagen S."/>
            <person name="Larsson P."/>
            <person name="Bearden S."/>
            <person name="Chu M."/>
            <person name="Oyston P."/>
            <person name="Forsman M."/>
            <person name="Andersson S."/>
            <person name="Lindler L."/>
            <person name="Titball R."/>
            <person name="Garcia E."/>
        </authorList>
    </citation>
    <scope>NUCLEOTIDE SEQUENCE [LARGE SCALE GENOMIC DNA]</scope>
    <source>
        <strain>LVS</strain>
    </source>
</reference>
<gene>
    <name type="primary">sodC</name>
    <name type="ordered locus">FTL_0380</name>
</gene>
<comment type="function">
    <text evidence="1">Destroys radicals which are normally produced within the cells and which are toxic to biological systems.</text>
</comment>
<comment type="catalytic activity">
    <reaction>
        <text>2 superoxide + 2 H(+) = H2O2 + O2</text>
        <dbReference type="Rhea" id="RHEA:20696"/>
        <dbReference type="ChEBI" id="CHEBI:15378"/>
        <dbReference type="ChEBI" id="CHEBI:15379"/>
        <dbReference type="ChEBI" id="CHEBI:16240"/>
        <dbReference type="ChEBI" id="CHEBI:18421"/>
        <dbReference type="EC" id="1.15.1.1"/>
    </reaction>
</comment>
<comment type="cofactor">
    <cofactor evidence="1">
        <name>Cu cation</name>
        <dbReference type="ChEBI" id="CHEBI:23378"/>
    </cofactor>
    <text evidence="1">Binds 1 copper ion per subunit.</text>
</comment>
<comment type="cofactor">
    <cofactor evidence="1">
        <name>Zn(2+)</name>
        <dbReference type="ChEBI" id="CHEBI:29105"/>
    </cofactor>
    <text evidence="1">Binds 1 zinc ion per subunit.</text>
</comment>
<comment type="subunit">
    <text evidence="1">Homodimer.</text>
</comment>
<comment type="subcellular location">
    <subcellularLocation>
        <location evidence="1">Periplasm</location>
    </subcellularLocation>
</comment>
<comment type="similarity">
    <text evidence="3">Belongs to the Cu-Zn superoxide dismutase family.</text>
</comment>
<name>SODC_FRATH</name>
<feature type="signal peptide" evidence="2">
    <location>
        <begin position="1"/>
        <end position="18"/>
    </location>
</feature>
<feature type="chain" id="PRO_0000032827" description="Superoxide dismutase [Cu-Zn]">
    <location>
        <begin position="19"/>
        <end position="185"/>
    </location>
</feature>
<feature type="binding site" evidence="1">
    <location>
        <position position="85"/>
    </location>
    <ligand>
        <name>Cu cation</name>
        <dbReference type="ChEBI" id="CHEBI:23378"/>
        <note>catalytic</note>
    </ligand>
</feature>
<feature type="binding site" evidence="1">
    <location>
        <position position="87"/>
    </location>
    <ligand>
        <name>Cu cation</name>
        <dbReference type="ChEBI" id="CHEBI:23378"/>
        <note>catalytic</note>
    </ligand>
</feature>
<feature type="binding site" evidence="1">
    <location>
        <position position="102"/>
    </location>
    <ligand>
        <name>Cu cation</name>
        <dbReference type="ChEBI" id="CHEBI:23378"/>
        <note>catalytic</note>
    </ligand>
</feature>
<feature type="binding site" evidence="1">
    <location>
        <position position="102"/>
    </location>
    <ligand>
        <name>Zn(2+)</name>
        <dbReference type="ChEBI" id="CHEBI:29105"/>
        <note>structural</note>
    </ligand>
</feature>
<feature type="binding site" evidence="1">
    <location>
        <position position="111"/>
    </location>
    <ligand>
        <name>Zn(2+)</name>
        <dbReference type="ChEBI" id="CHEBI:29105"/>
        <note>structural</note>
    </ligand>
</feature>
<feature type="binding site" evidence="1">
    <location>
        <position position="120"/>
    </location>
    <ligand>
        <name>Zn(2+)</name>
        <dbReference type="ChEBI" id="CHEBI:29105"/>
        <note>structural</note>
    </ligand>
</feature>
<feature type="binding site" evidence="1">
    <location>
        <position position="123"/>
    </location>
    <ligand>
        <name>Zn(2+)</name>
        <dbReference type="ChEBI" id="CHEBI:29105"/>
        <note>structural</note>
    </ligand>
</feature>
<feature type="binding site" evidence="1">
    <location>
        <position position="158"/>
    </location>
    <ligand>
        <name>Cu cation</name>
        <dbReference type="ChEBI" id="CHEBI:23378"/>
        <note>catalytic</note>
    </ligand>
</feature>
<feature type="disulfide bond" evidence="1">
    <location>
        <begin position="92"/>
        <end position="180"/>
    </location>
</feature>
<organism>
    <name type="scientific">Francisella tularensis subsp. holarctica (strain LVS)</name>
    <dbReference type="NCBI Taxonomy" id="376619"/>
    <lineage>
        <taxon>Bacteria</taxon>
        <taxon>Pseudomonadati</taxon>
        <taxon>Pseudomonadota</taxon>
        <taxon>Gammaproteobacteria</taxon>
        <taxon>Thiotrichales</taxon>
        <taxon>Francisellaceae</taxon>
        <taxon>Francisella</taxon>
    </lineage>
</organism>
<protein>
    <recommendedName>
        <fullName>Superoxide dismutase [Cu-Zn]</fullName>
        <ecNumber>1.15.1.1</ecNumber>
    </recommendedName>
</protein>
<evidence type="ECO:0000250" key="1"/>
<evidence type="ECO:0000255" key="2"/>
<evidence type="ECO:0000305" key="3"/>
<proteinExistence type="inferred from homology"/>